<protein>
    <recommendedName>
        <fullName evidence="1">ATP synthase subunit delta</fullName>
    </recommendedName>
    <alternativeName>
        <fullName evidence="1">ATP synthase F(1) sector subunit delta</fullName>
    </alternativeName>
    <alternativeName>
        <fullName evidence="1">F-type ATPase subunit delta</fullName>
        <shortName evidence="1">F-ATPase subunit delta</shortName>
    </alternativeName>
</protein>
<comment type="function">
    <text evidence="1">F(1)F(0) ATP synthase produces ATP from ADP in the presence of a proton or sodium gradient. F-type ATPases consist of two structural domains, F(1) containing the extramembraneous catalytic core and F(0) containing the membrane proton channel, linked together by a central stalk and a peripheral stalk. During catalysis, ATP synthesis in the catalytic domain of F(1) is coupled via a rotary mechanism of the central stalk subunits to proton translocation.</text>
</comment>
<comment type="function">
    <text evidence="1">This protein is part of the stalk that links CF(0) to CF(1). It either transmits conformational changes from CF(0) to CF(1) or is implicated in proton conduction.</text>
</comment>
<comment type="subunit">
    <text evidence="1">F-type ATPases have 2 components, F(1) - the catalytic core - and F(0) - the membrane proton channel. F(1) has five subunits: alpha(3), beta(3), gamma(1), delta(1), epsilon(1). F(0) has three main subunits: a(1), b(2) and c(10-14). The alpha and beta chains form an alternating ring which encloses part of the gamma chain. F(1) is attached to F(0) by a central stalk formed by the gamma and epsilon chains, while a peripheral stalk is formed by the delta and b chains.</text>
</comment>
<comment type="subcellular location">
    <subcellularLocation>
        <location evidence="1">Cell membrane</location>
        <topology evidence="1">Peripheral membrane protein</topology>
    </subcellularLocation>
</comment>
<comment type="similarity">
    <text evidence="1">Belongs to the ATPase delta chain family.</text>
</comment>
<sequence>MTKKEQALIEQYAKSLVQVCQERDTLEALQADVLAILEVFKATNLAKTLSSLAVPRAKRLELVRQLQGDNIVYLNNLLEVMLQNEREAYLYQVLLRVLSELASVSNQYDVTVTSAVPLSEEQKQRVRTVVSKRLAVKTGRLIEKVDPSLIGGFMISVNNKVIDTSIRRQLQAFKMNLK</sequence>
<feature type="chain" id="PRO_1000184807" description="ATP synthase subunit delta">
    <location>
        <begin position="1"/>
        <end position="178"/>
    </location>
</feature>
<accession>C0M717</accession>
<keyword id="KW-0066">ATP synthesis</keyword>
<keyword id="KW-1003">Cell membrane</keyword>
<keyword id="KW-0139">CF(1)</keyword>
<keyword id="KW-0375">Hydrogen ion transport</keyword>
<keyword id="KW-0406">Ion transport</keyword>
<keyword id="KW-0472">Membrane</keyword>
<keyword id="KW-0813">Transport</keyword>
<proteinExistence type="inferred from homology"/>
<dbReference type="EMBL" id="FM204883">
    <property type="protein sequence ID" value="CAW93432.1"/>
    <property type="molecule type" value="Genomic_DNA"/>
</dbReference>
<dbReference type="RefSeq" id="WP_012678112.1">
    <property type="nucleotide sequence ID" value="NC_012471.1"/>
</dbReference>
<dbReference type="SMR" id="C0M717"/>
<dbReference type="KEGG" id="seu:SEQ_0918"/>
<dbReference type="HOGENOM" id="CLU_085114_1_2_9"/>
<dbReference type="OrthoDB" id="9802471at2"/>
<dbReference type="Proteomes" id="UP000001365">
    <property type="component" value="Chromosome"/>
</dbReference>
<dbReference type="GO" id="GO:0005886">
    <property type="term" value="C:plasma membrane"/>
    <property type="evidence" value="ECO:0007669"/>
    <property type="project" value="UniProtKB-SubCell"/>
</dbReference>
<dbReference type="GO" id="GO:0045259">
    <property type="term" value="C:proton-transporting ATP synthase complex"/>
    <property type="evidence" value="ECO:0007669"/>
    <property type="project" value="UniProtKB-KW"/>
</dbReference>
<dbReference type="GO" id="GO:0046933">
    <property type="term" value="F:proton-transporting ATP synthase activity, rotational mechanism"/>
    <property type="evidence" value="ECO:0007669"/>
    <property type="project" value="UniProtKB-UniRule"/>
</dbReference>
<dbReference type="Gene3D" id="1.10.520.20">
    <property type="entry name" value="N-terminal domain of the delta subunit of the F1F0-ATP synthase"/>
    <property type="match status" value="1"/>
</dbReference>
<dbReference type="HAMAP" id="MF_01416">
    <property type="entry name" value="ATP_synth_delta_bact"/>
    <property type="match status" value="1"/>
</dbReference>
<dbReference type="InterPro" id="IPR026015">
    <property type="entry name" value="ATP_synth_OSCP/delta_N_sf"/>
</dbReference>
<dbReference type="InterPro" id="IPR000711">
    <property type="entry name" value="ATPase_OSCP/dsu"/>
</dbReference>
<dbReference type="NCBIfam" id="TIGR01145">
    <property type="entry name" value="ATP_synt_delta"/>
    <property type="match status" value="1"/>
</dbReference>
<dbReference type="NCBIfam" id="NF004401">
    <property type="entry name" value="PRK05758.2-1"/>
    <property type="match status" value="1"/>
</dbReference>
<dbReference type="PANTHER" id="PTHR11910">
    <property type="entry name" value="ATP SYNTHASE DELTA CHAIN"/>
    <property type="match status" value="1"/>
</dbReference>
<dbReference type="Pfam" id="PF00213">
    <property type="entry name" value="OSCP"/>
    <property type="match status" value="1"/>
</dbReference>
<dbReference type="PRINTS" id="PR00125">
    <property type="entry name" value="ATPASEDELTA"/>
</dbReference>
<dbReference type="SUPFAM" id="SSF47928">
    <property type="entry name" value="N-terminal domain of the delta subunit of the F1F0-ATP synthase"/>
    <property type="match status" value="1"/>
</dbReference>
<evidence type="ECO:0000255" key="1">
    <source>
        <dbReference type="HAMAP-Rule" id="MF_01416"/>
    </source>
</evidence>
<reference key="1">
    <citation type="journal article" date="2009" name="PLoS Pathog.">
        <title>Genomic evidence for the evolution of Streptococcus equi: host restriction, increased virulence, and genetic exchange with human pathogens.</title>
        <authorList>
            <person name="Holden M.T.G."/>
            <person name="Heather Z."/>
            <person name="Paillot R."/>
            <person name="Steward K.F."/>
            <person name="Webb K."/>
            <person name="Ainslie F."/>
            <person name="Jourdan T."/>
            <person name="Bason N.C."/>
            <person name="Holroyd N.E."/>
            <person name="Mungall K."/>
            <person name="Quail M.A."/>
            <person name="Sanders M."/>
            <person name="Simmonds M."/>
            <person name="Willey D."/>
            <person name="Brooks K."/>
            <person name="Aanensen D.M."/>
            <person name="Spratt B.G."/>
            <person name="Jolley K.A."/>
            <person name="Maiden M.C.J."/>
            <person name="Kehoe M."/>
            <person name="Chanter N."/>
            <person name="Bentley S.D."/>
            <person name="Robinson C."/>
            <person name="Maskell D.J."/>
            <person name="Parkhill J."/>
            <person name="Waller A.S."/>
        </authorList>
    </citation>
    <scope>NUCLEOTIDE SEQUENCE [LARGE SCALE GENOMIC DNA]</scope>
    <source>
        <strain>4047</strain>
    </source>
</reference>
<organism>
    <name type="scientific">Streptococcus equi subsp. equi (strain 4047)</name>
    <dbReference type="NCBI Taxonomy" id="553482"/>
    <lineage>
        <taxon>Bacteria</taxon>
        <taxon>Bacillati</taxon>
        <taxon>Bacillota</taxon>
        <taxon>Bacilli</taxon>
        <taxon>Lactobacillales</taxon>
        <taxon>Streptococcaceae</taxon>
        <taxon>Streptococcus</taxon>
    </lineage>
</organism>
<name>ATPD_STRE4</name>
<gene>
    <name evidence="1" type="primary">atpH</name>
    <name type="ordered locus">SEQ_0918</name>
</gene>